<accession>Q0T5W7</accession>
<evidence type="ECO:0000255" key="1">
    <source>
        <dbReference type="HAMAP-Rule" id="MF_01529"/>
    </source>
</evidence>
<dbReference type="EMBL" id="CP000266">
    <property type="protein sequence ID" value="ABF03298.1"/>
    <property type="molecule type" value="Genomic_DNA"/>
</dbReference>
<dbReference type="RefSeq" id="WP_000092220.1">
    <property type="nucleotide sequence ID" value="NC_008258.1"/>
</dbReference>
<dbReference type="SMR" id="Q0T5W7"/>
<dbReference type="KEGG" id="sfv:SFV_1087"/>
<dbReference type="HOGENOM" id="CLU_001265_60_2_6"/>
<dbReference type="Proteomes" id="UP000000659">
    <property type="component" value="Chromosome"/>
</dbReference>
<dbReference type="GO" id="GO:0005886">
    <property type="term" value="C:plasma membrane"/>
    <property type="evidence" value="ECO:0007669"/>
    <property type="project" value="UniProtKB-SubCell"/>
</dbReference>
<dbReference type="GO" id="GO:0022857">
    <property type="term" value="F:transmembrane transporter activity"/>
    <property type="evidence" value="ECO:0007669"/>
    <property type="project" value="UniProtKB-UniRule"/>
</dbReference>
<dbReference type="CDD" id="cd17329">
    <property type="entry name" value="MFS_MdtH_MDR_like"/>
    <property type="match status" value="1"/>
</dbReference>
<dbReference type="FunFam" id="1.20.1250.20:FF:000039">
    <property type="entry name" value="Multidrug resistance protein MdtH"/>
    <property type="match status" value="1"/>
</dbReference>
<dbReference type="Gene3D" id="1.20.1250.20">
    <property type="entry name" value="MFS general substrate transporter like domains"/>
    <property type="match status" value="1"/>
</dbReference>
<dbReference type="HAMAP" id="MF_01529">
    <property type="entry name" value="MFS_MdtH"/>
    <property type="match status" value="1"/>
</dbReference>
<dbReference type="InterPro" id="IPR011701">
    <property type="entry name" value="MFS"/>
</dbReference>
<dbReference type="InterPro" id="IPR020846">
    <property type="entry name" value="MFS_dom"/>
</dbReference>
<dbReference type="InterPro" id="IPR036259">
    <property type="entry name" value="MFS_trans_sf"/>
</dbReference>
<dbReference type="InterPro" id="IPR050171">
    <property type="entry name" value="MFS_Transporters"/>
</dbReference>
<dbReference type="InterPro" id="IPR022855">
    <property type="entry name" value="Multidrug-R_MdtH"/>
</dbReference>
<dbReference type="NCBIfam" id="NF008650">
    <property type="entry name" value="PRK11646.1"/>
    <property type="match status" value="1"/>
</dbReference>
<dbReference type="PANTHER" id="PTHR23517:SF2">
    <property type="entry name" value="MULTIDRUG RESISTANCE PROTEIN MDTH"/>
    <property type="match status" value="1"/>
</dbReference>
<dbReference type="PANTHER" id="PTHR23517">
    <property type="entry name" value="RESISTANCE PROTEIN MDTM, PUTATIVE-RELATED-RELATED"/>
    <property type="match status" value="1"/>
</dbReference>
<dbReference type="Pfam" id="PF07690">
    <property type="entry name" value="MFS_1"/>
    <property type="match status" value="1"/>
</dbReference>
<dbReference type="SUPFAM" id="SSF103473">
    <property type="entry name" value="MFS general substrate transporter"/>
    <property type="match status" value="1"/>
</dbReference>
<dbReference type="PROSITE" id="PS50850">
    <property type="entry name" value="MFS"/>
    <property type="match status" value="1"/>
</dbReference>
<protein>
    <recommendedName>
        <fullName evidence="1">Multidrug resistance protein MdtH</fullName>
    </recommendedName>
</protein>
<proteinExistence type="inferred from homology"/>
<comment type="subcellular location">
    <subcellularLocation>
        <location evidence="1">Cell inner membrane</location>
        <topology evidence="1">Multi-pass membrane protein</topology>
    </subcellularLocation>
</comment>
<comment type="similarity">
    <text evidence="1">Belongs to the major facilitator superfamily. DHA1 family. MdtH (TC 2.A.1.2.21) subfamily.</text>
</comment>
<gene>
    <name evidence="1" type="primary">mdtH</name>
    <name type="ordered locus">SFV_1087</name>
</gene>
<sequence>MSRVSQARNLGKYFLLIDNMLVVLGFFVVFPLISIRFVDQMGWAAVMVGIALGLRQFIQQGLGIFGGAIADRFGAKPMIVTGMLMRAAGFATMGIAHEPWLLWFSCLLSGLGGTLFDPPRSALVVKLIRPQQRGRFFSLLMMQDSASAVIGALLGSWLLQYDFRLVCATGPVLFVLCAAFNAWLLPAWKLSTVRTPVREGMTRVMRDKRFVTYVLTLAGYYMLAVQVMLMLPIMVNDVAGAPSAVKWMYAIEACLSLTLLYPIARWSEKHFRLEHRLMAGLLIMSLSMMPVGMVSGLQQLFTLICLFYIGSIIAEPARETLSASLADARARGSYMGFSRLGLAIGGAIGYIGGGWLFDLGKSAHQPELPWMMLGIIGIFTFLALGWQFSQKRAARRLLERDA</sequence>
<organism>
    <name type="scientific">Shigella flexneri serotype 5b (strain 8401)</name>
    <dbReference type="NCBI Taxonomy" id="373384"/>
    <lineage>
        <taxon>Bacteria</taxon>
        <taxon>Pseudomonadati</taxon>
        <taxon>Pseudomonadota</taxon>
        <taxon>Gammaproteobacteria</taxon>
        <taxon>Enterobacterales</taxon>
        <taxon>Enterobacteriaceae</taxon>
        <taxon>Shigella</taxon>
    </lineage>
</organism>
<name>MDTH_SHIF8</name>
<keyword id="KW-0997">Cell inner membrane</keyword>
<keyword id="KW-1003">Cell membrane</keyword>
<keyword id="KW-0472">Membrane</keyword>
<keyword id="KW-0812">Transmembrane</keyword>
<keyword id="KW-1133">Transmembrane helix</keyword>
<keyword id="KW-0813">Transport</keyword>
<feature type="chain" id="PRO_0000280501" description="Multidrug resistance protein MdtH">
    <location>
        <begin position="1"/>
        <end position="402"/>
    </location>
</feature>
<feature type="topological domain" description="Cytoplasmic" evidence="1">
    <location>
        <begin position="1"/>
        <end position="12"/>
    </location>
</feature>
<feature type="transmembrane region" description="Helical" evidence="1">
    <location>
        <begin position="13"/>
        <end position="33"/>
    </location>
</feature>
<feature type="topological domain" description="Periplasmic" evidence="1">
    <location>
        <begin position="34"/>
        <end position="98"/>
    </location>
</feature>
<feature type="transmembrane region" description="Helical" evidence="1">
    <location>
        <begin position="99"/>
        <end position="116"/>
    </location>
</feature>
<feature type="topological domain" description="Cytoplasmic" evidence="1">
    <location>
        <begin position="117"/>
        <end position="138"/>
    </location>
</feature>
<feature type="transmembrane region" description="Helical" evidence="1">
    <location>
        <begin position="139"/>
        <end position="159"/>
    </location>
</feature>
<feature type="topological domain" description="Periplasmic" evidence="1">
    <location>
        <begin position="160"/>
        <end position="164"/>
    </location>
</feature>
<feature type="transmembrane region" description="Helical" evidence="1">
    <location>
        <begin position="165"/>
        <end position="185"/>
    </location>
</feature>
<feature type="topological domain" description="Cytoplasmic" evidence="1">
    <location>
        <begin position="186"/>
        <end position="213"/>
    </location>
</feature>
<feature type="transmembrane region" description="Helical" evidence="1">
    <location>
        <begin position="214"/>
        <end position="234"/>
    </location>
</feature>
<feature type="topological domain" description="Periplasmic" evidence="1">
    <location>
        <begin position="235"/>
        <end position="243"/>
    </location>
</feature>
<feature type="transmembrane region" description="Helical" evidence="1">
    <location>
        <begin position="244"/>
        <end position="264"/>
    </location>
</feature>
<feature type="topological domain" description="Cytoplasmic" evidence="1">
    <location>
        <begin position="265"/>
        <end position="276"/>
    </location>
</feature>
<feature type="transmembrane region" description="Helical" evidence="1">
    <location>
        <begin position="277"/>
        <end position="297"/>
    </location>
</feature>
<feature type="topological domain" description="Periplasmic" evidence="1">
    <location>
        <begin position="298"/>
        <end position="299"/>
    </location>
</feature>
<feature type="transmembrane region" description="Helical" evidence="1">
    <location>
        <begin position="300"/>
        <end position="320"/>
    </location>
</feature>
<feature type="topological domain" description="Cytoplasmic" evidence="1">
    <location>
        <begin position="321"/>
        <end position="339"/>
    </location>
</feature>
<feature type="transmembrane region" description="Helical" evidence="1">
    <location>
        <begin position="340"/>
        <end position="360"/>
    </location>
</feature>
<feature type="topological domain" description="Periplasmic" evidence="1">
    <location>
        <begin position="361"/>
        <end position="367"/>
    </location>
</feature>
<feature type="transmembrane region" description="Helical" evidence="1">
    <location>
        <begin position="368"/>
        <end position="388"/>
    </location>
</feature>
<feature type="topological domain" description="Cytoplasmic" evidence="1">
    <location>
        <begin position="389"/>
        <end position="402"/>
    </location>
</feature>
<reference key="1">
    <citation type="journal article" date="2006" name="BMC Genomics">
        <title>Complete genome sequence of Shigella flexneri 5b and comparison with Shigella flexneri 2a.</title>
        <authorList>
            <person name="Nie H."/>
            <person name="Yang F."/>
            <person name="Zhang X."/>
            <person name="Yang J."/>
            <person name="Chen L."/>
            <person name="Wang J."/>
            <person name="Xiong Z."/>
            <person name="Peng J."/>
            <person name="Sun L."/>
            <person name="Dong J."/>
            <person name="Xue Y."/>
            <person name="Xu X."/>
            <person name="Chen S."/>
            <person name="Yao Z."/>
            <person name="Shen Y."/>
            <person name="Jin Q."/>
        </authorList>
    </citation>
    <scope>NUCLEOTIDE SEQUENCE [LARGE SCALE GENOMIC DNA]</scope>
    <source>
        <strain>8401</strain>
    </source>
</reference>